<sequence length="268" mass="28738">MERYESLFAQLKERKEGAFVPFVTLGDPGIEQSLKIIDTLIEAGADALELGIPFSDPLADGPTIQNATLRAFAAGVTPAQCFEMLALIRQKHPTIPIGLLMYANLVFNKGIDEFYAQCEKVGVDSVLVADVPIEESAPFRQAALRHNVAPIFICPPNADDDLLRQIASYGRGYTYLLSRAGVTGAENRAALPLNHLVAKLKEYNAAPPLQGFGISAPDQVKAAIDAGAAGAISGSAIVKIIEQHINEPEKMLAALKVFVQPMKAATRS</sequence>
<accession>B7LY16</accession>
<proteinExistence type="inferred from homology"/>
<feature type="chain" id="PRO_1000117738" description="Tryptophan synthase alpha chain">
    <location>
        <begin position="1"/>
        <end position="268"/>
    </location>
</feature>
<feature type="active site" description="Proton acceptor" evidence="1">
    <location>
        <position position="49"/>
    </location>
</feature>
<feature type="active site" description="Proton acceptor" evidence="1">
    <location>
        <position position="60"/>
    </location>
</feature>
<organism>
    <name type="scientific">Escherichia coli O8 (strain IAI1)</name>
    <dbReference type="NCBI Taxonomy" id="585034"/>
    <lineage>
        <taxon>Bacteria</taxon>
        <taxon>Pseudomonadati</taxon>
        <taxon>Pseudomonadota</taxon>
        <taxon>Gammaproteobacteria</taxon>
        <taxon>Enterobacterales</taxon>
        <taxon>Enterobacteriaceae</taxon>
        <taxon>Escherichia</taxon>
    </lineage>
</organism>
<comment type="function">
    <text evidence="1">The alpha subunit is responsible for the aldol cleavage of indoleglycerol phosphate to indole and glyceraldehyde 3-phosphate.</text>
</comment>
<comment type="catalytic activity">
    <reaction evidence="1">
        <text>(1S,2R)-1-C-(indol-3-yl)glycerol 3-phosphate + L-serine = D-glyceraldehyde 3-phosphate + L-tryptophan + H2O</text>
        <dbReference type="Rhea" id="RHEA:10532"/>
        <dbReference type="ChEBI" id="CHEBI:15377"/>
        <dbReference type="ChEBI" id="CHEBI:33384"/>
        <dbReference type="ChEBI" id="CHEBI:57912"/>
        <dbReference type="ChEBI" id="CHEBI:58866"/>
        <dbReference type="ChEBI" id="CHEBI:59776"/>
        <dbReference type="EC" id="4.2.1.20"/>
    </reaction>
</comment>
<comment type="pathway">
    <text evidence="1">Amino-acid biosynthesis; L-tryptophan biosynthesis; L-tryptophan from chorismate: step 5/5.</text>
</comment>
<comment type="subunit">
    <text evidence="1">Tetramer of two alpha and two beta chains.</text>
</comment>
<comment type="similarity">
    <text evidence="1">Belongs to the TrpA family.</text>
</comment>
<dbReference type="EC" id="4.2.1.20" evidence="1"/>
<dbReference type="EMBL" id="CU928160">
    <property type="protein sequence ID" value="CAQ98139.1"/>
    <property type="molecule type" value="Genomic_DNA"/>
</dbReference>
<dbReference type="RefSeq" id="WP_000443056.1">
    <property type="nucleotide sequence ID" value="NC_011741.1"/>
</dbReference>
<dbReference type="SMR" id="B7LY16"/>
<dbReference type="GeneID" id="75203372"/>
<dbReference type="KEGG" id="ecr:ECIAI1_1280"/>
<dbReference type="HOGENOM" id="CLU_016734_0_4_6"/>
<dbReference type="UniPathway" id="UPA00035">
    <property type="reaction ID" value="UER00044"/>
</dbReference>
<dbReference type="GO" id="GO:0005829">
    <property type="term" value="C:cytosol"/>
    <property type="evidence" value="ECO:0007669"/>
    <property type="project" value="TreeGrafter"/>
</dbReference>
<dbReference type="GO" id="GO:0004834">
    <property type="term" value="F:tryptophan synthase activity"/>
    <property type="evidence" value="ECO:0007669"/>
    <property type="project" value="UniProtKB-UniRule"/>
</dbReference>
<dbReference type="CDD" id="cd04724">
    <property type="entry name" value="Tryptophan_synthase_alpha"/>
    <property type="match status" value="1"/>
</dbReference>
<dbReference type="FunFam" id="3.20.20.70:FF:000037">
    <property type="entry name" value="Tryptophan synthase alpha chain"/>
    <property type="match status" value="1"/>
</dbReference>
<dbReference type="Gene3D" id="3.20.20.70">
    <property type="entry name" value="Aldolase class I"/>
    <property type="match status" value="1"/>
</dbReference>
<dbReference type="HAMAP" id="MF_00131">
    <property type="entry name" value="Trp_synth_alpha"/>
    <property type="match status" value="1"/>
</dbReference>
<dbReference type="InterPro" id="IPR013785">
    <property type="entry name" value="Aldolase_TIM"/>
</dbReference>
<dbReference type="InterPro" id="IPR011060">
    <property type="entry name" value="RibuloseP-bd_barrel"/>
</dbReference>
<dbReference type="InterPro" id="IPR018204">
    <property type="entry name" value="Trp_synthase_alpha_AS"/>
</dbReference>
<dbReference type="InterPro" id="IPR002028">
    <property type="entry name" value="Trp_synthase_suA"/>
</dbReference>
<dbReference type="NCBIfam" id="TIGR00262">
    <property type="entry name" value="trpA"/>
    <property type="match status" value="1"/>
</dbReference>
<dbReference type="PANTHER" id="PTHR43406:SF1">
    <property type="entry name" value="TRYPTOPHAN SYNTHASE ALPHA CHAIN, CHLOROPLASTIC"/>
    <property type="match status" value="1"/>
</dbReference>
<dbReference type="PANTHER" id="PTHR43406">
    <property type="entry name" value="TRYPTOPHAN SYNTHASE, ALPHA CHAIN"/>
    <property type="match status" value="1"/>
</dbReference>
<dbReference type="Pfam" id="PF00290">
    <property type="entry name" value="Trp_syntA"/>
    <property type="match status" value="1"/>
</dbReference>
<dbReference type="SUPFAM" id="SSF51366">
    <property type="entry name" value="Ribulose-phoshate binding barrel"/>
    <property type="match status" value="1"/>
</dbReference>
<dbReference type="PROSITE" id="PS00167">
    <property type="entry name" value="TRP_SYNTHASE_ALPHA"/>
    <property type="match status" value="1"/>
</dbReference>
<gene>
    <name evidence="1" type="primary">trpA</name>
    <name type="ordered locus">ECIAI1_1280</name>
</gene>
<protein>
    <recommendedName>
        <fullName evidence="1">Tryptophan synthase alpha chain</fullName>
        <ecNumber evidence="1">4.2.1.20</ecNumber>
    </recommendedName>
</protein>
<evidence type="ECO:0000255" key="1">
    <source>
        <dbReference type="HAMAP-Rule" id="MF_00131"/>
    </source>
</evidence>
<reference key="1">
    <citation type="journal article" date="2009" name="PLoS Genet.">
        <title>Organised genome dynamics in the Escherichia coli species results in highly diverse adaptive paths.</title>
        <authorList>
            <person name="Touchon M."/>
            <person name="Hoede C."/>
            <person name="Tenaillon O."/>
            <person name="Barbe V."/>
            <person name="Baeriswyl S."/>
            <person name="Bidet P."/>
            <person name="Bingen E."/>
            <person name="Bonacorsi S."/>
            <person name="Bouchier C."/>
            <person name="Bouvet O."/>
            <person name="Calteau A."/>
            <person name="Chiapello H."/>
            <person name="Clermont O."/>
            <person name="Cruveiller S."/>
            <person name="Danchin A."/>
            <person name="Diard M."/>
            <person name="Dossat C."/>
            <person name="Karoui M.E."/>
            <person name="Frapy E."/>
            <person name="Garry L."/>
            <person name="Ghigo J.M."/>
            <person name="Gilles A.M."/>
            <person name="Johnson J."/>
            <person name="Le Bouguenec C."/>
            <person name="Lescat M."/>
            <person name="Mangenot S."/>
            <person name="Martinez-Jehanne V."/>
            <person name="Matic I."/>
            <person name="Nassif X."/>
            <person name="Oztas S."/>
            <person name="Petit M.A."/>
            <person name="Pichon C."/>
            <person name="Rouy Z."/>
            <person name="Ruf C.S."/>
            <person name="Schneider D."/>
            <person name="Tourret J."/>
            <person name="Vacherie B."/>
            <person name="Vallenet D."/>
            <person name="Medigue C."/>
            <person name="Rocha E.P.C."/>
            <person name="Denamur E."/>
        </authorList>
    </citation>
    <scope>NUCLEOTIDE SEQUENCE [LARGE SCALE GENOMIC DNA]</scope>
    <source>
        <strain>IAI1</strain>
    </source>
</reference>
<keyword id="KW-0028">Amino-acid biosynthesis</keyword>
<keyword id="KW-0057">Aromatic amino acid biosynthesis</keyword>
<keyword id="KW-0456">Lyase</keyword>
<keyword id="KW-0822">Tryptophan biosynthesis</keyword>
<name>TRPA_ECO8A</name>